<gene>
    <name type="primary">LYPD5</name>
    <name type="ORF">UNQ1908/PRO4356</name>
</gene>
<feature type="signal peptide" evidence="4">
    <location>
        <begin position="1"/>
        <end position="25"/>
    </location>
</feature>
<feature type="chain" id="PRO_0000226763" description="Ly6/PLAUR domain-containing protein 5">
    <location>
        <begin position="26"/>
        <end position="225"/>
    </location>
</feature>
<feature type="propeptide" id="PRO_0000226764" description="Removed in mature form" evidence="1">
    <location>
        <begin position="226"/>
        <end position="251"/>
    </location>
</feature>
<feature type="domain" description="UPAR/Ly6">
    <location>
        <begin position="135"/>
        <end position="214"/>
    </location>
</feature>
<feature type="lipid moiety-binding region" description="GPI-anchor amidated alanine" evidence="1">
    <location>
        <position position="225"/>
    </location>
</feature>
<feature type="glycosylation site" description="N-linked (GlcNAc...) asparagine" evidence="1">
    <location>
        <position position="120"/>
    </location>
</feature>
<feature type="glycosylation site" description="N-linked (GlcNAc...) asparagine" evidence="1">
    <location>
        <position position="174"/>
    </location>
</feature>
<feature type="splice variant" id="VSP_017447" description="In isoform 2." evidence="5">
    <location>
        <begin position="1"/>
        <end position="43"/>
    </location>
</feature>
<feature type="sequence variant" id="VAR_052704" description="In dbSNP:rs114779742.">
    <original>P</original>
    <variation>A</variation>
    <location>
        <position position="47"/>
    </location>
</feature>
<feature type="sequence variant" id="VAR_059885" description="In dbSNP:rs11547806." evidence="2 3">
    <original>A</original>
    <variation>P</variation>
    <location>
        <position position="90"/>
    </location>
</feature>
<feature type="sequence variant" id="VAR_059886" description="In dbSNP:rs349053." evidence="2 3">
    <original>N</original>
    <variation>S</variation>
    <location>
        <position position="167"/>
    </location>
</feature>
<feature type="sequence conflict" description="In Ref. 3; AAH57816." evidence="6" ref="3">
    <original>T</original>
    <variation>S</variation>
    <location>
        <position position="194"/>
    </location>
</feature>
<proteinExistence type="evidence at protein level"/>
<keyword id="KW-0025">Alternative splicing</keyword>
<keyword id="KW-1003">Cell membrane</keyword>
<keyword id="KW-0903">Direct protein sequencing</keyword>
<keyword id="KW-0325">Glycoprotein</keyword>
<keyword id="KW-0336">GPI-anchor</keyword>
<keyword id="KW-0449">Lipoprotein</keyword>
<keyword id="KW-0472">Membrane</keyword>
<keyword id="KW-1267">Proteomics identification</keyword>
<keyword id="KW-1185">Reference proteome</keyword>
<keyword id="KW-0732">Signal</keyword>
<protein>
    <recommendedName>
        <fullName>Ly6/PLAUR domain-containing protein 5</fullName>
    </recommendedName>
</protein>
<dbReference type="EMBL" id="AY358719">
    <property type="protein sequence ID" value="AAQ89081.1"/>
    <property type="molecule type" value="mRNA"/>
</dbReference>
<dbReference type="EMBL" id="AK055031">
    <property type="protein sequence ID" value="BAB70840.1"/>
    <property type="molecule type" value="mRNA"/>
</dbReference>
<dbReference type="EMBL" id="BC057816">
    <property type="protein sequence ID" value="AAH57816.2"/>
    <property type="status" value="ALT_INIT"/>
    <property type="molecule type" value="mRNA"/>
</dbReference>
<dbReference type="CCDS" id="CCDS12631.1">
    <molecule id="Q6UWN5-2"/>
</dbReference>
<dbReference type="CCDS" id="CCDS46096.1">
    <molecule id="Q6UWN5-1"/>
</dbReference>
<dbReference type="RefSeq" id="NP_001026919.2">
    <molecule id="Q6UWN5-1"/>
    <property type="nucleotide sequence ID" value="NM_001031749.3"/>
</dbReference>
<dbReference type="RefSeq" id="NP_001275692.1">
    <molecule id="Q6UWN5-2"/>
    <property type="nucleotide sequence ID" value="NM_001288763.2"/>
</dbReference>
<dbReference type="RefSeq" id="NP_872379.2">
    <molecule id="Q6UWN5-2"/>
    <property type="nucleotide sequence ID" value="NM_182573.3"/>
</dbReference>
<dbReference type="RefSeq" id="XP_011525096.1">
    <property type="nucleotide sequence ID" value="XM_011526794.2"/>
</dbReference>
<dbReference type="SMR" id="Q6UWN5"/>
<dbReference type="BioGRID" id="129836">
    <property type="interactions" value="16"/>
</dbReference>
<dbReference type="FunCoup" id="Q6UWN5">
    <property type="interactions" value="97"/>
</dbReference>
<dbReference type="IntAct" id="Q6UWN5">
    <property type="interactions" value="13"/>
</dbReference>
<dbReference type="STRING" id="9606.ENSP00000367185"/>
<dbReference type="GlyCosmos" id="Q6UWN5">
    <property type="glycosylation" value="2 sites, No reported glycans"/>
</dbReference>
<dbReference type="GlyGen" id="Q6UWN5">
    <property type="glycosylation" value="2 sites"/>
</dbReference>
<dbReference type="iPTMnet" id="Q6UWN5"/>
<dbReference type="PhosphoSitePlus" id="Q6UWN5"/>
<dbReference type="BioMuta" id="LYPD5"/>
<dbReference type="DMDM" id="90185272"/>
<dbReference type="jPOST" id="Q6UWN5"/>
<dbReference type="MassIVE" id="Q6UWN5"/>
<dbReference type="PaxDb" id="9606-ENSP00000367185"/>
<dbReference type="PeptideAtlas" id="Q6UWN5"/>
<dbReference type="ProteomicsDB" id="67504">
    <molecule id="Q6UWN5-1"/>
</dbReference>
<dbReference type="ProteomicsDB" id="67505">
    <molecule id="Q6UWN5-2"/>
</dbReference>
<dbReference type="Antibodypedia" id="31133">
    <property type="antibodies" value="50 antibodies from 12 providers"/>
</dbReference>
<dbReference type="DNASU" id="284348"/>
<dbReference type="Ensembl" id="ENST00000377950.8">
    <molecule id="Q6UWN5-1"/>
    <property type="protein sequence ID" value="ENSP00000367185.2"/>
    <property type="gene ID" value="ENSG00000159871.15"/>
</dbReference>
<dbReference type="Ensembl" id="ENST00000414615.6">
    <molecule id="Q6UWN5-2"/>
    <property type="protein sequence ID" value="ENSP00000408433.1"/>
    <property type="gene ID" value="ENSG00000159871.15"/>
</dbReference>
<dbReference type="Ensembl" id="ENST00000594013.5">
    <molecule id="Q6UWN5-2"/>
    <property type="protein sequence ID" value="ENSP00000471692.1"/>
    <property type="gene ID" value="ENSG00000159871.15"/>
</dbReference>
<dbReference type="Ensembl" id="ENST00000651184.1">
    <molecule id="Q6UWN5-2"/>
    <property type="protein sequence ID" value="ENSP00000498724.1"/>
    <property type="gene ID" value="ENSG00000159871.15"/>
</dbReference>
<dbReference type="GeneID" id="284348"/>
<dbReference type="KEGG" id="hsa:284348"/>
<dbReference type="MANE-Select" id="ENST00000377950.8">
    <property type="protein sequence ID" value="ENSP00000367185.2"/>
    <property type="RefSeq nucleotide sequence ID" value="NM_001031749.3"/>
    <property type="RefSeq protein sequence ID" value="NP_001026919.2"/>
</dbReference>
<dbReference type="UCSC" id="uc002oxm.5">
    <molecule id="Q6UWN5-1"/>
    <property type="organism name" value="human"/>
</dbReference>
<dbReference type="AGR" id="HGNC:26397"/>
<dbReference type="CTD" id="284348"/>
<dbReference type="DisGeNET" id="284348"/>
<dbReference type="GeneCards" id="LYPD5"/>
<dbReference type="HGNC" id="HGNC:26397">
    <property type="gene designation" value="LYPD5"/>
</dbReference>
<dbReference type="HPA" id="ENSG00000159871">
    <property type="expression patterns" value="Tissue enriched (skin)"/>
</dbReference>
<dbReference type="MIM" id="619618">
    <property type="type" value="gene"/>
</dbReference>
<dbReference type="neXtProt" id="NX_Q6UWN5"/>
<dbReference type="OpenTargets" id="ENSG00000159871"/>
<dbReference type="PharmGKB" id="PA142671492"/>
<dbReference type="VEuPathDB" id="HostDB:ENSG00000159871"/>
<dbReference type="eggNOG" id="ENOG502SVAB">
    <property type="taxonomic scope" value="Eukaryota"/>
</dbReference>
<dbReference type="GeneTree" id="ENSGT00940000153599"/>
<dbReference type="HOGENOM" id="CLU_102584_0_0_1"/>
<dbReference type="InParanoid" id="Q6UWN5"/>
<dbReference type="OMA" id="FQHIYFG"/>
<dbReference type="OrthoDB" id="9445109at2759"/>
<dbReference type="PAN-GO" id="Q6UWN5">
    <property type="GO annotations" value="1 GO annotation based on evolutionary models"/>
</dbReference>
<dbReference type="PhylomeDB" id="Q6UWN5"/>
<dbReference type="TreeFam" id="TF337629"/>
<dbReference type="PathwayCommons" id="Q6UWN5"/>
<dbReference type="Reactome" id="R-HSA-163125">
    <property type="pathway name" value="Post-translational modification: synthesis of GPI-anchored proteins"/>
</dbReference>
<dbReference type="SignaLink" id="Q6UWN5"/>
<dbReference type="BioGRID-ORCS" id="284348">
    <property type="hits" value="14 hits in 1145 CRISPR screens"/>
</dbReference>
<dbReference type="ChiTaRS" id="LYPD5">
    <property type="organism name" value="human"/>
</dbReference>
<dbReference type="GenomeRNAi" id="284348"/>
<dbReference type="Pharos" id="Q6UWN5">
    <property type="development level" value="Tdark"/>
</dbReference>
<dbReference type="PRO" id="PR:Q6UWN5"/>
<dbReference type="Proteomes" id="UP000005640">
    <property type="component" value="Chromosome 19"/>
</dbReference>
<dbReference type="RNAct" id="Q6UWN5">
    <property type="molecule type" value="protein"/>
</dbReference>
<dbReference type="Bgee" id="ENSG00000159871">
    <property type="expression patterns" value="Expressed in skin of leg and 108 other cell types or tissues"/>
</dbReference>
<dbReference type="ExpressionAtlas" id="Q6UWN5">
    <property type="expression patterns" value="baseline and differential"/>
</dbReference>
<dbReference type="GO" id="GO:0005576">
    <property type="term" value="C:extracellular region"/>
    <property type="evidence" value="ECO:0000304"/>
    <property type="project" value="Reactome"/>
</dbReference>
<dbReference type="GO" id="GO:0005886">
    <property type="term" value="C:plasma membrane"/>
    <property type="evidence" value="ECO:0000318"/>
    <property type="project" value="GO_Central"/>
</dbReference>
<dbReference type="GO" id="GO:0098552">
    <property type="term" value="C:side of membrane"/>
    <property type="evidence" value="ECO:0007669"/>
    <property type="project" value="UniProtKB-KW"/>
</dbReference>
<dbReference type="CDD" id="cd23565">
    <property type="entry name" value="TFP_LU_ECD_LYPD5_rpt1"/>
    <property type="match status" value="1"/>
</dbReference>
<dbReference type="CDD" id="cd23566">
    <property type="entry name" value="TFP_LU_ECD_LYPD5_rpt2"/>
    <property type="match status" value="1"/>
</dbReference>
<dbReference type="FunFam" id="2.10.60.10:FF:000020">
    <property type="entry name" value="LY6/PLAUR domain containing 5"/>
    <property type="match status" value="1"/>
</dbReference>
<dbReference type="Gene3D" id="2.10.60.10">
    <property type="entry name" value="CD59"/>
    <property type="match status" value="1"/>
</dbReference>
<dbReference type="InterPro" id="IPR018363">
    <property type="entry name" value="CD59_antigen_CS"/>
</dbReference>
<dbReference type="InterPro" id="IPR016054">
    <property type="entry name" value="LY6_UPA_recep-like"/>
</dbReference>
<dbReference type="InterPro" id="IPR045860">
    <property type="entry name" value="Snake_toxin-like_sf"/>
</dbReference>
<dbReference type="PANTHER" id="PTHR10624:SF9">
    <property type="entry name" value="LY6_PLAUR DOMAIN-CONTAINING PROTEIN 5"/>
    <property type="match status" value="1"/>
</dbReference>
<dbReference type="PANTHER" id="PTHR10624">
    <property type="entry name" value="UROKINASE PLASMINOGEN ACTIVATOR SURFACE RECEPTOR-RELATED"/>
    <property type="match status" value="1"/>
</dbReference>
<dbReference type="Pfam" id="PF00021">
    <property type="entry name" value="UPAR_LY6"/>
    <property type="match status" value="1"/>
</dbReference>
<dbReference type="SUPFAM" id="SSF57302">
    <property type="entry name" value="Snake toxin-like"/>
    <property type="match status" value="2"/>
</dbReference>
<dbReference type="PROSITE" id="PS00983">
    <property type="entry name" value="LY6_UPAR"/>
    <property type="match status" value="1"/>
</dbReference>
<evidence type="ECO:0000255" key="1"/>
<evidence type="ECO:0000269" key="2">
    <source>
    </source>
</evidence>
<evidence type="ECO:0000269" key="3">
    <source>
    </source>
</evidence>
<evidence type="ECO:0000269" key="4">
    <source>
    </source>
</evidence>
<evidence type="ECO:0000303" key="5">
    <source>
    </source>
</evidence>
<evidence type="ECO:0000305" key="6"/>
<organism>
    <name type="scientific">Homo sapiens</name>
    <name type="common">Human</name>
    <dbReference type="NCBI Taxonomy" id="9606"/>
    <lineage>
        <taxon>Eukaryota</taxon>
        <taxon>Metazoa</taxon>
        <taxon>Chordata</taxon>
        <taxon>Craniata</taxon>
        <taxon>Vertebrata</taxon>
        <taxon>Euteleostomi</taxon>
        <taxon>Mammalia</taxon>
        <taxon>Eutheria</taxon>
        <taxon>Euarchontoglires</taxon>
        <taxon>Primates</taxon>
        <taxon>Haplorrhini</taxon>
        <taxon>Catarrhini</taxon>
        <taxon>Hominidae</taxon>
        <taxon>Homo</taxon>
    </lineage>
</organism>
<sequence length="251" mass="26936">MAMGVPRVILLCLFGAALCLTGSQALQCYSFEHTYFGPFDLRAMKLPSISCPHECFEAILSLDTGYRAPVTLVRKGCWTGPPAGQTQSNADALPPDYSVVRGCTTDKCNAHLMTHDALPNLSQAPDPPTLSGAECYACIGVHQDDCAIGRSRRVQCHQDQTACFQGNGRMTVGNFSVPVYIRTCHRPSCTTEGTTSPWTAIDLQGSCCEGYLCNRKSMTQPFTSASATTPPRALQVLALLLPVLLLVGLSA</sequence>
<accession>Q6UWN5</accession>
<accession>Q6PEX9</accession>
<accession>Q96DR2</accession>
<comment type="interaction">
    <interactant intactId="EBI-17200970">
        <id>Q6UWN5</id>
    </interactant>
    <interactant intactId="EBI-749204">
        <id>O15155</id>
        <label>BET1</label>
    </interactant>
    <organismsDiffer>false</organismsDiffer>
    <experiments>3</experiments>
</comment>
<comment type="interaction">
    <interactant intactId="EBI-17200970">
        <id>Q6UWN5</id>
    </interactant>
    <interactant intactId="EBI-2339219">
        <id>Q08426</id>
        <label>EHHADH</label>
    </interactant>
    <organismsDiffer>false</organismsDiffer>
    <experiments>3</experiments>
</comment>
<comment type="interaction">
    <interactant intactId="EBI-17200970">
        <id>Q6UWN5</id>
    </interactant>
    <interactant intactId="EBI-711490">
        <id>Q9UKR5</id>
        <label>ERG28</label>
    </interactant>
    <organismsDiffer>false</organismsDiffer>
    <experiments>3</experiments>
</comment>
<comment type="interaction">
    <interactant intactId="EBI-17200970">
        <id>Q6UWN5</id>
    </interactant>
    <interactant intactId="EBI-10976398">
        <id>Q7Z2K6</id>
        <label>ERMP1</label>
    </interactant>
    <organismsDiffer>false</organismsDiffer>
    <experiments>3</experiments>
</comment>
<comment type="interaction">
    <interactant intactId="EBI-17200970">
        <id>Q6UWN5</id>
    </interactant>
    <interactant intactId="EBI-7932862">
        <id>Q01628</id>
        <label>IFITM3</label>
    </interactant>
    <organismsDiffer>false</organismsDiffer>
    <experiments>3</experiments>
</comment>
<comment type="interaction">
    <interactant intactId="EBI-17200970">
        <id>Q6UWN5</id>
    </interactant>
    <interactant intactId="EBI-10317425">
        <id>Q9NZG7</id>
        <label>NINJ2</label>
    </interactant>
    <organismsDiffer>false</organismsDiffer>
    <experiments>3</experiments>
</comment>
<comment type="interaction">
    <interactant intactId="EBI-17200970">
        <id>Q6UWN5</id>
    </interactant>
    <interactant intactId="EBI-12955265">
        <id>Q96GM1</id>
        <label>PLPPR2</label>
    </interactant>
    <organismsDiffer>false</organismsDiffer>
    <experiments>3</experiments>
</comment>
<comment type="interaction">
    <interactant intactId="EBI-17200970">
        <id>Q6UWN5</id>
    </interactant>
    <interactant intactId="EBI-6623146">
        <id>P30536</id>
        <label>TSPO</label>
    </interactant>
    <organismsDiffer>false</organismsDiffer>
    <experiments>3</experiments>
</comment>
<comment type="subcellular location">
    <subcellularLocation>
        <location evidence="6">Cell membrane</location>
        <topology evidence="6">Lipid-anchor</topology>
        <topology evidence="6">GPI-anchor</topology>
    </subcellularLocation>
</comment>
<comment type="alternative products">
    <event type="alternative splicing"/>
    <isoform>
        <id>Q6UWN5-1</id>
        <name>1</name>
        <sequence type="displayed"/>
    </isoform>
    <isoform>
        <id>Q6UWN5-2</id>
        <name>2</name>
        <sequence type="described" ref="VSP_017447"/>
    </isoform>
</comment>
<comment type="sequence caution" evidence="6">
    <conflict type="erroneous initiation">
        <sequence resource="EMBL-CDS" id="AAH57816"/>
    </conflict>
</comment>
<name>LYPD5_HUMAN</name>
<reference key="1">
    <citation type="journal article" date="2003" name="Genome Res.">
        <title>The secreted protein discovery initiative (SPDI), a large-scale effort to identify novel human secreted and transmembrane proteins: a bioinformatics assessment.</title>
        <authorList>
            <person name="Clark H.F."/>
            <person name="Gurney A.L."/>
            <person name="Abaya E."/>
            <person name="Baker K."/>
            <person name="Baldwin D.T."/>
            <person name="Brush J."/>
            <person name="Chen J."/>
            <person name="Chow B."/>
            <person name="Chui C."/>
            <person name="Crowley C."/>
            <person name="Currell B."/>
            <person name="Deuel B."/>
            <person name="Dowd P."/>
            <person name="Eaton D."/>
            <person name="Foster J.S."/>
            <person name="Grimaldi C."/>
            <person name="Gu Q."/>
            <person name="Hass P.E."/>
            <person name="Heldens S."/>
            <person name="Huang A."/>
            <person name="Kim H.S."/>
            <person name="Klimowski L."/>
            <person name="Jin Y."/>
            <person name="Johnson S."/>
            <person name="Lee J."/>
            <person name="Lewis L."/>
            <person name="Liao D."/>
            <person name="Mark M.R."/>
            <person name="Robbie E."/>
            <person name="Sanchez C."/>
            <person name="Schoenfeld J."/>
            <person name="Seshagiri S."/>
            <person name="Simmons L."/>
            <person name="Singh J."/>
            <person name="Smith V."/>
            <person name="Stinson J."/>
            <person name="Vagts A."/>
            <person name="Vandlen R.L."/>
            <person name="Watanabe C."/>
            <person name="Wieand D."/>
            <person name="Woods K."/>
            <person name="Xie M.-H."/>
            <person name="Yansura D.G."/>
            <person name="Yi S."/>
            <person name="Yu G."/>
            <person name="Yuan J."/>
            <person name="Zhang M."/>
            <person name="Zhang Z."/>
            <person name="Goddard A.D."/>
            <person name="Wood W.I."/>
            <person name="Godowski P.J."/>
            <person name="Gray A.M."/>
        </authorList>
    </citation>
    <scope>NUCLEOTIDE SEQUENCE [LARGE SCALE MRNA] (ISOFORM 1)</scope>
    <scope>VARIANTS PRO-90 AND SER-167</scope>
</reference>
<reference key="2">
    <citation type="journal article" date="2004" name="Nat. Genet.">
        <title>Complete sequencing and characterization of 21,243 full-length human cDNAs.</title>
        <authorList>
            <person name="Ota T."/>
            <person name="Suzuki Y."/>
            <person name="Nishikawa T."/>
            <person name="Otsuki T."/>
            <person name="Sugiyama T."/>
            <person name="Irie R."/>
            <person name="Wakamatsu A."/>
            <person name="Hayashi K."/>
            <person name="Sato H."/>
            <person name="Nagai K."/>
            <person name="Kimura K."/>
            <person name="Makita H."/>
            <person name="Sekine M."/>
            <person name="Obayashi M."/>
            <person name="Nishi T."/>
            <person name="Shibahara T."/>
            <person name="Tanaka T."/>
            <person name="Ishii S."/>
            <person name="Yamamoto J."/>
            <person name="Saito K."/>
            <person name="Kawai Y."/>
            <person name="Isono Y."/>
            <person name="Nakamura Y."/>
            <person name="Nagahari K."/>
            <person name="Murakami K."/>
            <person name="Yasuda T."/>
            <person name="Iwayanagi T."/>
            <person name="Wagatsuma M."/>
            <person name="Shiratori A."/>
            <person name="Sudo H."/>
            <person name="Hosoiri T."/>
            <person name="Kaku Y."/>
            <person name="Kodaira H."/>
            <person name="Kondo H."/>
            <person name="Sugawara M."/>
            <person name="Takahashi M."/>
            <person name="Kanda K."/>
            <person name="Yokoi T."/>
            <person name="Furuya T."/>
            <person name="Kikkawa E."/>
            <person name="Omura Y."/>
            <person name="Abe K."/>
            <person name="Kamihara K."/>
            <person name="Katsuta N."/>
            <person name="Sato K."/>
            <person name="Tanikawa M."/>
            <person name="Yamazaki M."/>
            <person name="Ninomiya K."/>
            <person name="Ishibashi T."/>
            <person name="Yamashita H."/>
            <person name="Murakawa K."/>
            <person name="Fujimori K."/>
            <person name="Tanai H."/>
            <person name="Kimata M."/>
            <person name="Watanabe M."/>
            <person name="Hiraoka S."/>
            <person name="Chiba Y."/>
            <person name="Ishida S."/>
            <person name="Ono Y."/>
            <person name="Takiguchi S."/>
            <person name="Watanabe S."/>
            <person name="Yosida M."/>
            <person name="Hotuta T."/>
            <person name="Kusano J."/>
            <person name="Kanehori K."/>
            <person name="Takahashi-Fujii A."/>
            <person name="Hara H."/>
            <person name="Tanase T.-O."/>
            <person name="Nomura Y."/>
            <person name="Togiya S."/>
            <person name="Komai F."/>
            <person name="Hara R."/>
            <person name="Takeuchi K."/>
            <person name="Arita M."/>
            <person name="Imose N."/>
            <person name="Musashino K."/>
            <person name="Yuuki H."/>
            <person name="Oshima A."/>
            <person name="Sasaki N."/>
            <person name="Aotsuka S."/>
            <person name="Yoshikawa Y."/>
            <person name="Matsunawa H."/>
            <person name="Ichihara T."/>
            <person name="Shiohata N."/>
            <person name="Sano S."/>
            <person name="Moriya S."/>
            <person name="Momiyama H."/>
            <person name="Satoh N."/>
            <person name="Takami S."/>
            <person name="Terashima Y."/>
            <person name="Suzuki O."/>
            <person name="Nakagawa S."/>
            <person name="Senoh A."/>
            <person name="Mizoguchi H."/>
            <person name="Goto Y."/>
            <person name="Shimizu F."/>
            <person name="Wakebe H."/>
            <person name="Hishigaki H."/>
            <person name="Watanabe T."/>
            <person name="Sugiyama A."/>
            <person name="Takemoto M."/>
            <person name="Kawakami B."/>
            <person name="Yamazaki M."/>
            <person name="Watanabe K."/>
            <person name="Kumagai A."/>
            <person name="Itakura S."/>
            <person name="Fukuzumi Y."/>
            <person name="Fujimori Y."/>
            <person name="Komiyama M."/>
            <person name="Tashiro H."/>
            <person name="Tanigami A."/>
            <person name="Fujiwara T."/>
            <person name="Ono T."/>
            <person name="Yamada K."/>
            <person name="Fujii Y."/>
            <person name="Ozaki K."/>
            <person name="Hirao M."/>
            <person name="Ohmori Y."/>
            <person name="Kawabata A."/>
            <person name="Hikiji T."/>
            <person name="Kobatake N."/>
            <person name="Inagaki H."/>
            <person name="Ikema Y."/>
            <person name="Okamoto S."/>
            <person name="Okitani R."/>
            <person name="Kawakami T."/>
            <person name="Noguchi S."/>
            <person name="Itoh T."/>
            <person name="Shigeta K."/>
            <person name="Senba T."/>
            <person name="Matsumura K."/>
            <person name="Nakajima Y."/>
            <person name="Mizuno T."/>
            <person name="Morinaga M."/>
            <person name="Sasaki M."/>
            <person name="Togashi T."/>
            <person name="Oyama M."/>
            <person name="Hata H."/>
            <person name="Watanabe M."/>
            <person name="Komatsu T."/>
            <person name="Mizushima-Sugano J."/>
            <person name="Satoh T."/>
            <person name="Shirai Y."/>
            <person name="Takahashi Y."/>
            <person name="Nakagawa K."/>
            <person name="Okumura K."/>
            <person name="Nagase T."/>
            <person name="Nomura N."/>
            <person name="Kikuchi H."/>
            <person name="Masuho Y."/>
            <person name="Yamashita R."/>
            <person name="Nakai K."/>
            <person name="Yada T."/>
            <person name="Nakamura Y."/>
            <person name="Ohara O."/>
            <person name="Isogai T."/>
            <person name="Sugano S."/>
        </authorList>
    </citation>
    <scope>NUCLEOTIDE SEQUENCE [LARGE SCALE MRNA] (ISOFORM 2)</scope>
    <scope>VARIANTS PRO-90 AND SER-167</scope>
    <source>
        <tissue>Brain</tissue>
    </source>
</reference>
<reference key="3">
    <citation type="journal article" date="2004" name="Genome Res.">
        <title>The status, quality, and expansion of the NIH full-length cDNA project: the Mammalian Gene Collection (MGC).</title>
        <authorList>
            <consortium name="The MGC Project Team"/>
        </authorList>
    </citation>
    <scope>NUCLEOTIDE SEQUENCE [LARGE SCALE MRNA] (ISOFORM 1)</scope>
    <source>
        <tissue>Placenta</tissue>
    </source>
</reference>
<reference key="4">
    <citation type="journal article" date="2004" name="Protein Sci.">
        <title>Signal peptide prediction based on analysis of experimentally verified cleavage sites.</title>
        <authorList>
            <person name="Zhang Z."/>
            <person name="Henzel W.J."/>
        </authorList>
    </citation>
    <scope>PROTEIN SEQUENCE OF 26-40</scope>
</reference>